<sequence>MYILVWKEGQQIRTFQDLEESVQFRTASNITDGQIFSINVTPTMGKGGETGETQLRRLMYLSASTEPENCNADYVGDMAHFATLRNKSIGVSGFYMYSAPFLFQVIQGTDEDLDFLCANGSADPRHQRCIELADGPTTGRMYGWWHLKDSHIDNITKDPAIKTILIEIARSFSSMWSYLPRNAANMVLLGKNPNKQAPEPMSVVVTVIYLVEFSVIMAHPGLSEQCPDILPAFVDACVPHVDGTGGEVAKFIIAICMAYWPINSDEHALVGLQQLSDDLAELRSLQEDGSARSLIYSRCGLHFGRAMLCNAGFRKADFTLLGDWINSASRITSLSVNSKVPLLLSFLVRCLLGDEMRVELERSGLHKVGGRVKPVQVYQFNAPELDTATVRGEIKQFNPGRERALCPVKPYESLHPAHPDPIFDDTPRENQPELSQVQRRDSLVDRLSQIAKLAFPSSMMAGGEGQLITLTYISQAAHPVSRLDLASIQRIAFARNESSNITKSLLYVSGLFVQTLEGTKGAVVSLYLKNRQDKRHKDVVAAFMAPIDEGVYGSPLDMTSATEEMLATFTPLHDVLSQLAKSFISLETYVPSTVVRHLAAGNNPRNLQPVSVEVVMLATAISSFTPLSEKCSLTEVWTICNTFIVACTSAICNEGGEVIKLIGDCVPAYFPPTNADNAVHACQEIVSFCAQLRAAFHDVLDCRSVVACGVGLDYGQVIMVQCGSLGMTEFVVAGEVRARVLEVEALTREAGRAIVITEPVPERQSPKLRDTGIVPCQEGVDGARCYGILGPEWELDVATIKKNINGFLKDARALAANKKVDDGTNISCRGGNPPAGGIPTSPKVRPPGRTNSVSSYTPDPKQALDPRMAESVFLDMCHQGDTVNNSIAVKLGLAANEDGFDGGWILTWYVELMPVKQAIKVLTQLRIGNMSDNFVDDNNVGELLEKCIPTRSLQVLDLSNNPGLTKVIALKPKHNTQVREILLNGTRIAPTEQRKQQTSKNVNRLCASTDLKGSHKYEH</sequence>
<protein>
    <recommendedName>
        <fullName>Photoactivated adenylate cyclase subunit alpha-like protein 1224-5/1F</fullName>
    </recommendedName>
</protein>
<name>PAL1F_EUGGR</name>
<dbReference type="EMBL" id="AM181336">
    <property type="protein sequence ID" value="CAJ57395.1"/>
    <property type="molecule type" value="mRNA"/>
</dbReference>
<dbReference type="SMR" id="P84738"/>
<dbReference type="GO" id="GO:0031514">
    <property type="term" value="C:motile cilium"/>
    <property type="evidence" value="ECO:0000314"/>
    <property type="project" value="UniProtKB"/>
</dbReference>
<dbReference type="GO" id="GO:0009882">
    <property type="term" value="F:blue light photoreceptor activity"/>
    <property type="evidence" value="ECO:0007669"/>
    <property type="project" value="InterPro"/>
</dbReference>
<dbReference type="GO" id="GO:0071949">
    <property type="term" value="F:FAD binding"/>
    <property type="evidence" value="ECO:0007669"/>
    <property type="project" value="InterPro"/>
</dbReference>
<dbReference type="GO" id="GO:0009190">
    <property type="term" value="P:cyclic nucleotide biosynthetic process"/>
    <property type="evidence" value="ECO:0007669"/>
    <property type="project" value="InterPro"/>
</dbReference>
<dbReference type="CDD" id="cd07302">
    <property type="entry name" value="CHD"/>
    <property type="match status" value="2"/>
</dbReference>
<dbReference type="FunFam" id="3.30.70.1230:FF:000065">
    <property type="entry name" value="Photoactivated adenylate cyclase subunit alpha-like protein ST"/>
    <property type="match status" value="1"/>
</dbReference>
<dbReference type="FunFam" id="3.30.70.100:FF:000064">
    <property type="entry name" value="Photoactivated adenylate cyclase subunit beta-like protein ST"/>
    <property type="match status" value="1"/>
</dbReference>
<dbReference type="Gene3D" id="3.30.70.100">
    <property type="match status" value="2"/>
</dbReference>
<dbReference type="Gene3D" id="3.30.70.1230">
    <property type="entry name" value="Nucleotide cyclase"/>
    <property type="match status" value="2"/>
</dbReference>
<dbReference type="InterPro" id="IPR001054">
    <property type="entry name" value="A/G_cyclase"/>
</dbReference>
<dbReference type="InterPro" id="IPR036046">
    <property type="entry name" value="Acylphosphatase-like_dom_sf"/>
</dbReference>
<dbReference type="InterPro" id="IPR050697">
    <property type="entry name" value="Adenylyl/Guanylyl_Cyclase_3/4"/>
</dbReference>
<dbReference type="InterPro" id="IPR007024">
    <property type="entry name" value="BLUF_domain"/>
</dbReference>
<dbReference type="InterPro" id="IPR029787">
    <property type="entry name" value="Nucleotide_cyclase"/>
</dbReference>
<dbReference type="PANTHER" id="PTHR43081:SF1">
    <property type="entry name" value="ADENYLATE CYCLASE, TERMINAL-DIFFERENTIATION SPECIFIC"/>
    <property type="match status" value="1"/>
</dbReference>
<dbReference type="PANTHER" id="PTHR43081">
    <property type="entry name" value="ADENYLATE CYCLASE, TERMINAL-DIFFERENTIATION SPECIFIC-RELATED"/>
    <property type="match status" value="1"/>
</dbReference>
<dbReference type="Pfam" id="PF04940">
    <property type="entry name" value="BLUF"/>
    <property type="match status" value="2"/>
</dbReference>
<dbReference type="SMART" id="SM01034">
    <property type="entry name" value="BLUF"/>
    <property type="match status" value="2"/>
</dbReference>
<dbReference type="SUPFAM" id="SSF54975">
    <property type="entry name" value="Acylphosphatase/BLUF domain-like"/>
    <property type="match status" value="2"/>
</dbReference>
<dbReference type="SUPFAM" id="SSF55073">
    <property type="entry name" value="Nucleotide cyclase"/>
    <property type="match status" value="2"/>
</dbReference>
<dbReference type="SUPFAM" id="SSF52047">
    <property type="entry name" value="RNI-like"/>
    <property type="match status" value="1"/>
</dbReference>
<dbReference type="PROSITE" id="PS50925">
    <property type="entry name" value="BLUF"/>
    <property type="match status" value="2"/>
</dbReference>
<dbReference type="PROSITE" id="PS50125">
    <property type="entry name" value="GUANYLATE_CYCLASE_2"/>
    <property type="match status" value="1"/>
</dbReference>
<proteinExistence type="evidence at transcript level"/>
<accession>P84738</accession>
<accession>Q2P9M9</accession>
<gene>
    <name evidence="7" type="primary">pacA</name>
</gene>
<organism>
    <name type="scientific">Euglena gracilis</name>
    <dbReference type="NCBI Taxonomy" id="3039"/>
    <lineage>
        <taxon>Eukaryota</taxon>
        <taxon>Discoba</taxon>
        <taxon>Euglenozoa</taxon>
        <taxon>Euglenida</taxon>
        <taxon>Spirocuta</taxon>
        <taxon>Euglenophyceae</taxon>
        <taxon>Euglenales</taxon>
        <taxon>Euglenaceae</taxon>
        <taxon>Euglena</taxon>
    </lineage>
</organism>
<evidence type="ECO:0000250" key="1">
    <source>
        <dbReference type="UniProtKB" id="Q8S9F2"/>
    </source>
</evidence>
<evidence type="ECO:0000255" key="2">
    <source>
        <dbReference type="PROSITE-ProRule" id="PRU00030"/>
    </source>
</evidence>
<evidence type="ECO:0000255" key="3">
    <source>
        <dbReference type="PROSITE-ProRule" id="PRU00099"/>
    </source>
</evidence>
<evidence type="ECO:0000256" key="4">
    <source>
        <dbReference type="SAM" id="MobiDB-lite"/>
    </source>
</evidence>
<evidence type="ECO:0000269" key="5">
    <source>
    </source>
</evidence>
<evidence type="ECO:0000305" key="6"/>
<evidence type="ECO:0000312" key="7">
    <source>
        <dbReference type="EMBL" id="CAJ57395.1"/>
    </source>
</evidence>
<comment type="subunit">
    <text evidence="1">Heterotetramer of two alpha and two beta subunits.</text>
</comment>
<comment type="subcellular location">
    <subcellularLocation>
        <location evidence="5">Cell projection</location>
        <location evidence="5">Cilium</location>
        <location evidence="5">Flagellum</location>
    </subcellularLocation>
    <text>Paraxonemal body. And paraxonemal bodies (PABs).</text>
</comment>
<comment type="miscellaneous">
    <text evidence="5">The 1224-5/1F strain is deficient in phototaxis. It is not known if this is due to defective adenylate cyclase activity or defective BLUF domains in this protein.</text>
</comment>
<comment type="similarity">
    <text evidence="3">Belongs to the adenylyl cyclase class-4/guanylyl cyclase family.</text>
</comment>
<reference evidence="6 7" key="1">
    <citation type="journal article" date="2005" name="Photochem. Photobiol. Sci.">
        <title>Photoactivated adenylyl cyclase (PAC) genes in the flagellate Euglena gracilis mutant strains.</title>
        <authorList>
            <person name="Ntefidou M."/>
            <person name="Haeder D.-P."/>
        </authorList>
    </citation>
    <scope>NUCLEOTIDE SEQUENCE [MRNA]</scope>
    <scope>SUBCELLULAR LOCATION</scope>
    <source>
        <strain>SAG 1224-5/1F</strain>
    </source>
</reference>
<feature type="chain" id="PRO_0000195719" description="Photoactivated adenylate cyclase subunit alpha-like protein 1224-5/1F">
    <location>
        <begin position="1"/>
        <end position="1019"/>
    </location>
</feature>
<feature type="domain" description="BLUF 1" evidence="2">
    <location>
        <begin position="55"/>
        <end position="148"/>
    </location>
</feature>
<feature type="domain" description="Guanylate cyclase 1" evidence="3">
    <location>
        <begin position="204"/>
        <end position="332"/>
    </location>
</feature>
<feature type="domain" description="BLUF 2" evidence="2">
    <location>
        <begin position="467"/>
        <end position="559"/>
    </location>
</feature>
<feature type="domain" description="Guanylate cyclase 2" evidence="3">
    <location>
        <begin position="615"/>
        <end position="744"/>
    </location>
</feature>
<feature type="region of interest" description="Disordered" evidence="4">
    <location>
        <begin position="825"/>
        <end position="863"/>
    </location>
</feature>
<keyword id="KW-0966">Cell projection</keyword>
<keyword id="KW-0969">Cilium</keyword>
<keyword id="KW-0282">Flagellum</keyword>
<keyword id="KW-0677">Repeat</keyword>